<sequence>MPGLFAAKKLKDNRQNFRWKDTQYKRKTLGLNIKADPLEGSPQARGIVIEKVGIEAKQPNSAIRKCVRVQLIKNGKQITAFAPGDGAIGFIDEHDEVMIEGIGGPSGRSMGDIPGVRWKVTKVNNVALSEMVSGKIEKPVR</sequence>
<dbReference type="EMBL" id="CP000102">
    <property type="protein sequence ID" value="ABC57745.1"/>
    <property type="molecule type" value="Genomic_DNA"/>
</dbReference>
<dbReference type="RefSeq" id="WP_011406944.1">
    <property type="nucleotide sequence ID" value="NC_007681.1"/>
</dbReference>
<dbReference type="SMR" id="Q2NEK8"/>
<dbReference type="STRING" id="339860.Msp_1369"/>
<dbReference type="KEGG" id="mst:Msp_1369"/>
<dbReference type="eggNOG" id="arCOG04255">
    <property type="taxonomic scope" value="Archaea"/>
</dbReference>
<dbReference type="HOGENOM" id="CLU_115574_0_1_2"/>
<dbReference type="OrthoDB" id="45154at2157"/>
<dbReference type="Proteomes" id="UP000001931">
    <property type="component" value="Chromosome"/>
</dbReference>
<dbReference type="GO" id="GO:0015935">
    <property type="term" value="C:small ribosomal subunit"/>
    <property type="evidence" value="ECO:0007669"/>
    <property type="project" value="InterPro"/>
</dbReference>
<dbReference type="GO" id="GO:0019843">
    <property type="term" value="F:rRNA binding"/>
    <property type="evidence" value="ECO:0007669"/>
    <property type="project" value="UniProtKB-UniRule"/>
</dbReference>
<dbReference type="GO" id="GO:0003735">
    <property type="term" value="F:structural constituent of ribosome"/>
    <property type="evidence" value="ECO:0007669"/>
    <property type="project" value="InterPro"/>
</dbReference>
<dbReference type="GO" id="GO:0006412">
    <property type="term" value="P:translation"/>
    <property type="evidence" value="ECO:0007669"/>
    <property type="project" value="UniProtKB-UniRule"/>
</dbReference>
<dbReference type="CDD" id="cd03367">
    <property type="entry name" value="Ribosomal_S23"/>
    <property type="match status" value="1"/>
</dbReference>
<dbReference type="FunFam" id="2.40.50.140:FF:000007">
    <property type="entry name" value="40S ribosomal protein S23"/>
    <property type="match status" value="1"/>
</dbReference>
<dbReference type="Gene3D" id="2.40.50.140">
    <property type="entry name" value="Nucleic acid-binding proteins"/>
    <property type="match status" value="1"/>
</dbReference>
<dbReference type="HAMAP" id="MF_00403_A">
    <property type="entry name" value="Ribosomal_uS12_A"/>
    <property type="match status" value="1"/>
</dbReference>
<dbReference type="InterPro" id="IPR012340">
    <property type="entry name" value="NA-bd_OB-fold"/>
</dbReference>
<dbReference type="InterPro" id="IPR006032">
    <property type="entry name" value="Ribosomal_uS12"/>
</dbReference>
<dbReference type="InterPro" id="IPR022863">
    <property type="entry name" value="Ribosomal_uS12_arc"/>
</dbReference>
<dbReference type="InterPro" id="IPR005680">
    <property type="entry name" value="Ribosomal_uS12_euk/arc"/>
</dbReference>
<dbReference type="NCBIfam" id="NF003254">
    <property type="entry name" value="PRK04211.1"/>
    <property type="match status" value="1"/>
</dbReference>
<dbReference type="NCBIfam" id="TIGR00982">
    <property type="entry name" value="uS12_E_A"/>
    <property type="match status" value="1"/>
</dbReference>
<dbReference type="PANTHER" id="PTHR11652">
    <property type="entry name" value="30S RIBOSOMAL PROTEIN S12 FAMILY MEMBER"/>
    <property type="match status" value="1"/>
</dbReference>
<dbReference type="Pfam" id="PF00164">
    <property type="entry name" value="Ribosom_S12_S23"/>
    <property type="match status" value="1"/>
</dbReference>
<dbReference type="PIRSF" id="PIRSF002133">
    <property type="entry name" value="Ribosomal_S12/S23"/>
    <property type="match status" value="1"/>
</dbReference>
<dbReference type="SUPFAM" id="SSF50249">
    <property type="entry name" value="Nucleic acid-binding proteins"/>
    <property type="match status" value="1"/>
</dbReference>
<dbReference type="PROSITE" id="PS00055">
    <property type="entry name" value="RIBOSOMAL_S12"/>
    <property type="match status" value="1"/>
</dbReference>
<accession>Q2NEK8</accession>
<proteinExistence type="inferred from homology"/>
<evidence type="ECO:0000255" key="1">
    <source>
        <dbReference type="HAMAP-Rule" id="MF_00403"/>
    </source>
</evidence>
<evidence type="ECO:0000305" key="2"/>
<protein>
    <recommendedName>
        <fullName evidence="1">Small ribosomal subunit protein uS12</fullName>
    </recommendedName>
    <alternativeName>
        <fullName evidence="2">30S ribosomal protein S12</fullName>
    </alternativeName>
</protein>
<name>RS12_METST</name>
<gene>
    <name evidence="1" type="primary">rps12</name>
    <name type="ordered locus">Msp_1369</name>
</gene>
<reference key="1">
    <citation type="journal article" date="2006" name="J. Bacteriol.">
        <title>The genome sequence of Methanosphaera stadtmanae reveals why this human intestinal archaeon is restricted to methanol and H2 for methane formation and ATP synthesis.</title>
        <authorList>
            <person name="Fricke W.F."/>
            <person name="Seedorf H."/>
            <person name="Henne A."/>
            <person name="Kruer M."/>
            <person name="Liesegang H."/>
            <person name="Hedderich R."/>
            <person name="Gottschalk G."/>
            <person name="Thauer R.K."/>
        </authorList>
    </citation>
    <scope>NUCLEOTIDE SEQUENCE [LARGE SCALE GENOMIC DNA]</scope>
    <source>
        <strain>ATCC 43021 / DSM 3091 / JCM 11832 / MCB-3</strain>
    </source>
</reference>
<organism>
    <name type="scientific">Methanosphaera stadtmanae (strain ATCC 43021 / DSM 3091 / JCM 11832 / MCB-3)</name>
    <dbReference type="NCBI Taxonomy" id="339860"/>
    <lineage>
        <taxon>Archaea</taxon>
        <taxon>Methanobacteriati</taxon>
        <taxon>Methanobacteriota</taxon>
        <taxon>Methanomada group</taxon>
        <taxon>Methanobacteria</taxon>
        <taxon>Methanobacteriales</taxon>
        <taxon>Methanobacteriaceae</taxon>
        <taxon>Methanosphaera</taxon>
    </lineage>
</organism>
<comment type="function">
    <text evidence="1">With S4 and S5 plays an important role in translational accuracy. Located at the interface of the 30S and 50S subunits.</text>
</comment>
<comment type="subunit">
    <text evidence="1">Part of the 30S ribosomal subunit.</text>
</comment>
<comment type="similarity">
    <text evidence="1">Belongs to the universal ribosomal protein uS12 family.</text>
</comment>
<feature type="chain" id="PRO_0000238153" description="Small ribosomal subunit protein uS12">
    <location>
        <begin position="1"/>
        <end position="141"/>
    </location>
</feature>
<keyword id="KW-1185">Reference proteome</keyword>
<keyword id="KW-0687">Ribonucleoprotein</keyword>
<keyword id="KW-0689">Ribosomal protein</keyword>
<keyword id="KW-0694">RNA-binding</keyword>
<keyword id="KW-0699">rRNA-binding</keyword>